<dbReference type="EC" id="2.7.1.207" evidence="1"/>
<dbReference type="EMBL" id="CP000046">
    <property type="protein sequence ID" value="AAW37057.1"/>
    <property type="status" value="ALT_INIT"/>
    <property type="molecule type" value="Genomic_DNA"/>
</dbReference>
<dbReference type="RefSeq" id="WP_000983330.1">
    <property type="nucleotide sequence ID" value="NZ_JBGOFO010000004.1"/>
</dbReference>
<dbReference type="SMR" id="Q5HE15"/>
<dbReference type="KEGG" id="sac:SACOL2181"/>
<dbReference type="HOGENOM" id="CLU_029688_0_0_9"/>
<dbReference type="Proteomes" id="UP000000530">
    <property type="component" value="Chromosome"/>
</dbReference>
<dbReference type="GO" id="GO:0005886">
    <property type="term" value="C:plasma membrane"/>
    <property type="evidence" value="ECO:0007669"/>
    <property type="project" value="UniProtKB-SubCell"/>
</dbReference>
<dbReference type="GO" id="GO:0016301">
    <property type="term" value="F:kinase activity"/>
    <property type="evidence" value="ECO:0007669"/>
    <property type="project" value="UniProtKB-KW"/>
</dbReference>
<dbReference type="GO" id="GO:0022869">
    <property type="term" value="F:protein-N(PI)-phosphohistidine-lactose phosphotransferase system transporter activity"/>
    <property type="evidence" value="ECO:0007669"/>
    <property type="project" value="InterPro"/>
</dbReference>
<dbReference type="GO" id="GO:1901264">
    <property type="term" value="P:carbohydrate derivative transport"/>
    <property type="evidence" value="ECO:0007669"/>
    <property type="project" value="TreeGrafter"/>
</dbReference>
<dbReference type="GO" id="GO:0009401">
    <property type="term" value="P:phosphoenolpyruvate-dependent sugar phosphotransferase system"/>
    <property type="evidence" value="ECO:0007669"/>
    <property type="project" value="UniProtKB-KW"/>
</dbReference>
<dbReference type="CDD" id="cd05565">
    <property type="entry name" value="PTS_IIB_lactose"/>
    <property type="match status" value="1"/>
</dbReference>
<dbReference type="Gene3D" id="3.40.50.2300">
    <property type="match status" value="1"/>
</dbReference>
<dbReference type="InterPro" id="IPR004801">
    <property type="entry name" value="LacE"/>
</dbReference>
<dbReference type="InterPro" id="IPR036095">
    <property type="entry name" value="PTS_EIIB-like_sf"/>
</dbReference>
<dbReference type="InterPro" id="IPR003501">
    <property type="entry name" value="PTS_EIIB_2/3"/>
</dbReference>
<dbReference type="InterPro" id="IPR013012">
    <property type="entry name" value="PTS_EIIB_3"/>
</dbReference>
<dbReference type="InterPro" id="IPR003352">
    <property type="entry name" value="PTS_EIIC"/>
</dbReference>
<dbReference type="InterPro" id="IPR004501">
    <property type="entry name" value="PTS_EIIC_3"/>
</dbReference>
<dbReference type="InterPro" id="IPR041713">
    <property type="entry name" value="PTS_IIB"/>
</dbReference>
<dbReference type="InterPro" id="IPR051088">
    <property type="entry name" value="PTS_Sugar-EIIC/EIIB"/>
</dbReference>
<dbReference type="NCBIfam" id="TIGR00394">
    <property type="entry name" value="lac_pts_IIC"/>
    <property type="match status" value="1"/>
</dbReference>
<dbReference type="NCBIfam" id="TIGR00410">
    <property type="entry name" value="lacE"/>
    <property type="match status" value="1"/>
</dbReference>
<dbReference type="NCBIfam" id="TIGR00853">
    <property type="entry name" value="pts-lac"/>
    <property type="match status" value="1"/>
</dbReference>
<dbReference type="PANTHER" id="PTHR33989">
    <property type="match status" value="1"/>
</dbReference>
<dbReference type="PANTHER" id="PTHR33989:SF8">
    <property type="entry name" value="PERMEASE IIC COMPONENT"/>
    <property type="match status" value="1"/>
</dbReference>
<dbReference type="Pfam" id="PF02378">
    <property type="entry name" value="PTS_EIIC"/>
    <property type="match status" value="1"/>
</dbReference>
<dbReference type="Pfam" id="PF02302">
    <property type="entry name" value="PTS_IIB"/>
    <property type="match status" value="1"/>
</dbReference>
<dbReference type="SUPFAM" id="SSF52794">
    <property type="entry name" value="PTS system IIB component-like"/>
    <property type="match status" value="1"/>
</dbReference>
<dbReference type="PROSITE" id="PS51100">
    <property type="entry name" value="PTS_EIIB_TYPE_3"/>
    <property type="match status" value="1"/>
</dbReference>
<dbReference type="PROSITE" id="PS51105">
    <property type="entry name" value="PTS_EIIC_TYPE_3"/>
    <property type="match status" value="1"/>
</dbReference>
<protein>
    <recommendedName>
        <fullName evidence="1">PTS system lactose-specific EIICB component</fullName>
    </recommendedName>
    <alternativeName>
        <fullName evidence="1">EIICB-Lac</fullName>
        <shortName evidence="1">EII-Lac</shortName>
    </alternativeName>
    <domain>
        <recommendedName>
            <fullName evidence="1">PTS system lactose-specific EIIC component</fullName>
        </recommendedName>
        <alternativeName>
            <fullName evidence="1">Lactose permease IIC component</fullName>
        </alternativeName>
    </domain>
    <domain>
        <recommendedName>
            <fullName evidence="1">PTS system lactose-specific EIIB component</fullName>
            <ecNumber evidence="1">2.7.1.207</ecNumber>
        </recommendedName>
        <alternativeName>
            <fullName evidence="1">Lactose-specific phosphotransferase enzyme IIB component</fullName>
        </alternativeName>
    </domain>
</protein>
<organism>
    <name type="scientific">Staphylococcus aureus (strain COL)</name>
    <dbReference type="NCBI Taxonomy" id="93062"/>
    <lineage>
        <taxon>Bacteria</taxon>
        <taxon>Bacillati</taxon>
        <taxon>Bacillota</taxon>
        <taxon>Bacilli</taxon>
        <taxon>Bacillales</taxon>
        <taxon>Staphylococcaceae</taxon>
        <taxon>Staphylococcus</taxon>
    </lineage>
</organism>
<comment type="function">
    <text evidence="1">The phosphoenolpyruvate-dependent sugar phosphotransferase system (sugar PTS), a major carbohydrate active transport system, catalyzes the phosphorylation of incoming sugar substrates concomitantly with their translocation across the cell membrane. The enzyme II LacEF PTS system is involved in lactose transport.</text>
</comment>
<comment type="catalytic activity">
    <reaction evidence="1">
        <text>lactose(out) + N(pros)-phospho-L-histidyl-[protein] = lactose 6-phosphate(in) + L-histidyl-[protein]</text>
        <dbReference type="Rhea" id="RHEA:42400"/>
        <dbReference type="Rhea" id="RHEA-COMP:9745"/>
        <dbReference type="Rhea" id="RHEA-COMP:9746"/>
        <dbReference type="ChEBI" id="CHEBI:17716"/>
        <dbReference type="ChEBI" id="CHEBI:29979"/>
        <dbReference type="ChEBI" id="CHEBI:64837"/>
        <dbReference type="ChEBI" id="CHEBI:79080"/>
        <dbReference type="EC" id="2.7.1.207"/>
    </reaction>
</comment>
<comment type="subcellular location">
    <subcellularLocation>
        <location evidence="1 3">Cell membrane</location>
        <topology evidence="1 3">Multi-pass membrane protein</topology>
    </subcellularLocation>
</comment>
<comment type="induction">
    <text evidence="1">Induced by lactose, galactose and galactose-6-P. Repressed by glucose.</text>
</comment>
<comment type="domain">
    <text evidence="3">The EIIC type-3 domain forms the PTS system translocation channel and contains the specific substrate-binding site.</text>
</comment>
<comment type="domain">
    <text evidence="2">The PTS EIIB type-3 domain is phosphorylated by phospho-EIIA on a cysteinyl residue. Then, it transfers the phosphoryl group to the sugar substrate concomitantly with the sugar uptake processed by the PTS EIIC type-3 domain.</text>
</comment>
<comment type="sequence caution" evidence="4">
    <conflict type="erroneous initiation">
        <sequence resource="EMBL-CDS" id="AAW37057"/>
    </conflict>
    <text>Extended N-terminus.</text>
</comment>
<sequence>MMQKLIAQIEKGKPFFEKLSRNIYLRAIRDGFISAMPVILFSSIFLLIAYVPNIFGFKWDKGMEAILMKPYNYTMGLVAFLVAGTTAKSLTDSFNRKLESTNQINFISTMLAAMCGFLFLASDPAKDGGFLSAFMGTKGLLTAFLSAFVTVIVYNFCVKRNITIKMPKEVPPNISQVFKDLIPFSAVIIILYALDLVIRNSFKSNVAEGILKLFEPLFTAADGWIGVTIIFGAFALFWFVGIHGPSIVEPAIAAITYANIEANFKLLQAGEHADKIITSGTQMFIVTFGGTGATLVVPFMFMWMTKSKRNKAIGRASVVPTFFGVNEPILFGAPLVLNPVFFIPFVLAPIVNVWIFKLFVEVLGMNSFSVNLPWTTPGPLGIIMGTGFGLWSFVLAITLIVVDIIIYYPFLKVYDSEILDEEEGRKESNSDLKEKVAANFDTKKADSILAASGVSDDAAKASNITEQTNVLVLCAGGGTSGLLANALNKAAEEYHVPVKAAAGGYGAHMDIMKEYQLIILAPQVASNYEDIKQDTDRLGIKLAKTQGAEYIKLTRDGQAALDFVQQQFEN</sequence>
<keyword id="KW-1003">Cell membrane</keyword>
<keyword id="KW-0418">Kinase</keyword>
<keyword id="KW-0472">Membrane</keyword>
<keyword id="KW-0597">Phosphoprotein</keyword>
<keyword id="KW-0598">Phosphotransferase system</keyword>
<keyword id="KW-0762">Sugar transport</keyword>
<keyword id="KW-0808">Transferase</keyword>
<keyword id="KW-0812">Transmembrane</keyword>
<keyword id="KW-1133">Transmembrane helix</keyword>
<keyword id="KW-0813">Transport</keyword>
<gene>
    <name evidence="1" type="primary">lacE</name>
    <name type="ordered locus">SACOL2181</name>
</gene>
<feature type="chain" id="PRO_0000186585" description="PTS system lactose-specific EIICB component">
    <location>
        <begin position="1"/>
        <end position="570"/>
    </location>
</feature>
<feature type="transmembrane region" description="Helical" evidence="3">
    <location>
        <begin position="31"/>
        <end position="51"/>
    </location>
</feature>
<feature type="transmembrane region" description="Helical" evidence="3">
    <location>
        <begin position="65"/>
        <end position="85"/>
    </location>
</feature>
<feature type="transmembrane region" description="Helical" evidence="3">
    <location>
        <begin position="104"/>
        <end position="124"/>
    </location>
</feature>
<feature type="transmembrane region" description="Helical" evidence="3">
    <location>
        <begin position="133"/>
        <end position="153"/>
    </location>
</feature>
<feature type="transmembrane region" description="Helical" evidence="3">
    <location>
        <begin position="178"/>
        <end position="198"/>
    </location>
</feature>
<feature type="transmembrane region" description="Helical" evidence="3">
    <location>
        <begin position="223"/>
        <end position="243"/>
    </location>
</feature>
<feature type="transmembrane region" description="Helical" evidence="3">
    <location>
        <begin position="283"/>
        <end position="303"/>
    </location>
</feature>
<feature type="transmembrane region" description="Helical" evidence="3">
    <location>
        <begin position="340"/>
        <end position="360"/>
    </location>
</feature>
<feature type="transmembrane region" description="Helical" evidence="3">
    <location>
        <begin position="382"/>
        <end position="402"/>
    </location>
</feature>
<feature type="domain" description="PTS EIIC type-3" evidence="3">
    <location>
        <begin position="9"/>
        <end position="410"/>
    </location>
</feature>
<feature type="domain" description="PTS EIIB type-3" evidence="2">
    <location>
        <begin position="467"/>
        <end position="570"/>
    </location>
</feature>
<feature type="active site" description="Phosphocysteine intermediate; for EIIB activity" evidence="1">
    <location>
        <position position="474"/>
    </location>
</feature>
<feature type="modified residue" description="Phosphocysteine; by EIIA" evidence="1 2">
    <location>
        <position position="474"/>
    </location>
</feature>
<accession>Q5HE15</accession>
<evidence type="ECO:0000250" key="1">
    <source>
        <dbReference type="UniProtKB" id="P11162"/>
    </source>
</evidence>
<evidence type="ECO:0000255" key="2">
    <source>
        <dbReference type="PROSITE-ProRule" id="PRU00423"/>
    </source>
</evidence>
<evidence type="ECO:0000255" key="3">
    <source>
        <dbReference type="PROSITE-ProRule" id="PRU00428"/>
    </source>
</evidence>
<evidence type="ECO:0000305" key="4"/>
<name>PTLCB_STAAC</name>
<proteinExistence type="inferred from homology"/>
<reference key="1">
    <citation type="journal article" date="2005" name="J. Bacteriol.">
        <title>Insights on evolution of virulence and resistance from the complete genome analysis of an early methicillin-resistant Staphylococcus aureus strain and a biofilm-producing methicillin-resistant Staphylococcus epidermidis strain.</title>
        <authorList>
            <person name="Gill S.R."/>
            <person name="Fouts D.E."/>
            <person name="Archer G.L."/>
            <person name="Mongodin E.F."/>
            <person name="DeBoy R.T."/>
            <person name="Ravel J."/>
            <person name="Paulsen I.T."/>
            <person name="Kolonay J.F."/>
            <person name="Brinkac L.M."/>
            <person name="Beanan M.J."/>
            <person name="Dodson R.J."/>
            <person name="Daugherty S.C."/>
            <person name="Madupu R."/>
            <person name="Angiuoli S.V."/>
            <person name="Durkin A.S."/>
            <person name="Haft D.H."/>
            <person name="Vamathevan J.J."/>
            <person name="Khouri H."/>
            <person name="Utterback T.R."/>
            <person name="Lee C."/>
            <person name="Dimitrov G."/>
            <person name="Jiang L."/>
            <person name="Qin H."/>
            <person name="Weidman J."/>
            <person name="Tran K."/>
            <person name="Kang K.H."/>
            <person name="Hance I.R."/>
            <person name="Nelson K.E."/>
            <person name="Fraser C.M."/>
        </authorList>
    </citation>
    <scope>NUCLEOTIDE SEQUENCE [LARGE SCALE GENOMIC DNA]</scope>
    <source>
        <strain>COL</strain>
    </source>
</reference>